<protein>
    <recommendedName>
        <fullName evidence="1">Large ribosomal subunit protein uL15</fullName>
    </recommendedName>
    <alternativeName>
        <fullName evidence="3">50S ribosomal protein L15</fullName>
    </alternativeName>
</protein>
<feature type="chain" id="PRO_0000104688" description="Large ribosomal subunit protein uL15">
    <location>
        <begin position="1"/>
        <end position="145"/>
    </location>
</feature>
<feature type="region of interest" description="Disordered" evidence="2">
    <location>
        <begin position="1"/>
        <end position="58"/>
    </location>
</feature>
<feature type="compositionally biased region" description="Gly residues" evidence="2">
    <location>
        <begin position="19"/>
        <end position="33"/>
    </location>
</feature>
<name>RL15_BORGP</name>
<dbReference type="EMBL" id="CP000013">
    <property type="protein sequence ID" value="AAU07348.1"/>
    <property type="molecule type" value="Genomic_DNA"/>
</dbReference>
<dbReference type="RefSeq" id="WP_011193813.1">
    <property type="nucleotide sequence ID" value="NZ_CP028872.1"/>
</dbReference>
<dbReference type="SMR" id="Q661C3"/>
<dbReference type="GeneID" id="45161291"/>
<dbReference type="KEGG" id="bga:BG0509"/>
<dbReference type="eggNOG" id="COG0200">
    <property type="taxonomic scope" value="Bacteria"/>
</dbReference>
<dbReference type="HOGENOM" id="CLU_055188_4_2_12"/>
<dbReference type="OrthoDB" id="9810293at2"/>
<dbReference type="Proteomes" id="UP000002276">
    <property type="component" value="Chromosome"/>
</dbReference>
<dbReference type="GO" id="GO:0022625">
    <property type="term" value="C:cytosolic large ribosomal subunit"/>
    <property type="evidence" value="ECO:0007669"/>
    <property type="project" value="TreeGrafter"/>
</dbReference>
<dbReference type="GO" id="GO:0019843">
    <property type="term" value="F:rRNA binding"/>
    <property type="evidence" value="ECO:0007669"/>
    <property type="project" value="UniProtKB-UniRule"/>
</dbReference>
<dbReference type="GO" id="GO:0003735">
    <property type="term" value="F:structural constituent of ribosome"/>
    <property type="evidence" value="ECO:0007669"/>
    <property type="project" value="InterPro"/>
</dbReference>
<dbReference type="GO" id="GO:0006412">
    <property type="term" value="P:translation"/>
    <property type="evidence" value="ECO:0007669"/>
    <property type="project" value="UniProtKB-UniRule"/>
</dbReference>
<dbReference type="Gene3D" id="3.100.10.10">
    <property type="match status" value="1"/>
</dbReference>
<dbReference type="HAMAP" id="MF_01341">
    <property type="entry name" value="Ribosomal_uL15"/>
    <property type="match status" value="1"/>
</dbReference>
<dbReference type="InterPro" id="IPR030878">
    <property type="entry name" value="Ribosomal_uL15"/>
</dbReference>
<dbReference type="InterPro" id="IPR021131">
    <property type="entry name" value="Ribosomal_uL15/eL18"/>
</dbReference>
<dbReference type="InterPro" id="IPR036227">
    <property type="entry name" value="Ribosomal_uL15/eL18_sf"/>
</dbReference>
<dbReference type="InterPro" id="IPR005749">
    <property type="entry name" value="Ribosomal_uL15_bac-type"/>
</dbReference>
<dbReference type="InterPro" id="IPR001196">
    <property type="entry name" value="Ribosomal_uL15_CS"/>
</dbReference>
<dbReference type="NCBIfam" id="TIGR01071">
    <property type="entry name" value="rplO_bact"/>
    <property type="match status" value="1"/>
</dbReference>
<dbReference type="PANTHER" id="PTHR12934">
    <property type="entry name" value="50S RIBOSOMAL PROTEIN L15"/>
    <property type="match status" value="1"/>
</dbReference>
<dbReference type="PANTHER" id="PTHR12934:SF11">
    <property type="entry name" value="LARGE RIBOSOMAL SUBUNIT PROTEIN UL15M"/>
    <property type="match status" value="1"/>
</dbReference>
<dbReference type="Pfam" id="PF00828">
    <property type="entry name" value="Ribosomal_L27A"/>
    <property type="match status" value="1"/>
</dbReference>
<dbReference type="SUPFAM" id="SSF52080">
    <property type="entry name" value="Ribosomal proteins L15p and L18e"/>
    <property type="match status" value="1"/>
</dbReference>
<dbReference type="PROSITE" id="PS00475">
    <property type="entry name" value="RIBOSOMAL_L15"/>
    <property type="match status" value="1"/>
</dbReference>
<comment type="function">
    <text evidence="1">Binds to the 23S rRNA.</text>
</comment>
<comment type="subunit">
    <text evidence="1">Part of the 50S ribosomal subunit.</text>
</comment>
<comment type="similarity">
    <text evidence="1">Belongs to the universal ribosomal protein uL15 family.</text>
</comment>
<proteinExistence type="inferred from homology"/>
<sequence>MFNLLKPKGASKRRKIVGRGPGSGLGKTSGRGQKGQKARNTSPRLGFEGGQTPLYRRLPRKGFSNNDYKLEYTIVNLGDIDKKFKDGQVVNYDTLLENKLIRKKNKKIKILSNGELTKKVSLEVSKISKSAESLVIRIGGTIKLV</sequence>
<gene>
    <name evidence="1" type="primary">rplO</name>
    <name type="ordered locus">BG0509</name>
</gene>
<organism>
    <name type="scientific">Borrelia garinii subsp. bavariensis (strain ATCC BAA-2496 / DSM 23469 / PBi)</name>
    <name type="common">Borreliella bavariensis</name>
    <dbReference type="NCBI Taxonomy" id="290434"/>
    <lineage>
        <taxon>Bacteria</taxon>
        <taxon>Pseudomonadati</taxon>
        <taxon>Spirochaetota</taxon>
        <taxon>Spirochaetia</taxon>
        <taxon>Spirochaetales</taxon>
        <taxon>Borreliaceae</taxon>
        <taxon>Borreliella</taxon>
    </lineage>
</organism>
<keyword id="KW-0687">Ribonucleoprotein</keyword>
<keyword id="KW-0689">Ribosomal protein</keyword>
<keyword id="KW-0694">RNA-binding</keyword>
<keyword id="KW-0699">rRNA-binding</keyword>
<evidence type="ECO:0000255" key="1">
    <source>
        <dbReference type="HAMAP-Rule" id="MF_01341"/>
    </source>
</evidence>
<evidence type="ECO:0000256" key="2">
    <source>
        <dbReference type="SAM" id="MobiDB-lite"/>
    </source>
</evidence>
<evidence type="ECO:0000305" key="3"/>
<reference key="1">
    <citation type="journal article" date="2004" name="Nucleic Acids Res.">
        <title>Comparative analysis of the Borrelia garinii genome.</title>
        <authorList>
            <person name="Gloeckner G."/>
            <person name="Lehmann R."/>
            <person name="Romualdi A."/>
            <person name="Pradella S."/>
            <person name="Schulte-Spechtel U."/>
            <person name="Schilhabel M."/>
            <person name="Wilske B."/>
            <person name="Suehnel J."/>
            <person name="Platzer M."/>
        </authorList>
    </citation>
    <scope>NUCLEOTIDE SEQUENCE [LARGE SCALE GENOMIC DNA]</scope>
    <source>
        <strain>ATCC BAA-2496 / DSM 23469 / PBi</strain>
    </source>
</reference>
<accession>Q661C3</accession>